<name>PSBT_CALFL</name>
<gene>
    <name evidence="1" type="primary">psbT</name>
</gene>
<reference key="1">
    <citation type="journal article" date="2000" name="Am. J. Bot.">
        <title>Utility of 17 chloroplast genes for inferring the phylogeny of the basal angiosperms.</title>
        <authorList>
            <person name="Graham S.W."/>
            <person name="Olmstead R.G."/>
        </authorList>
    </citation>
    <scope>NUCLEOTIDE SEQUENCE [GENOMIC DNA]</scope>
</reference>
<feature type="chain" id="PRO_0000217911" description="Photosystem II reaction center protein T">
    <location>
        <begin position="1"/>
        <end position="35"/>
    </location>
</feature>
<feature type="transmembrane region" description="Helical" evidence="1">
    <location>
        <begin position="3"/>
        <end position="23"/>
    </location>
</feature>
<organism>
    <name type="scientific">Calycanthus floridus</name>
    <name type="common">Eastern sweetshrub</name>
    <dbReference type="NCBI Taxonomy" id="3429"/>
    <lineage>
        <taxon>Eukaryota</taxon>
        <taxon>Viridiplantae</taxon>
        <taxon>Streptophyta</taxon>
        <taxon>Embryophyta</taxon>
        <taxon>Tracheophyta</taxon>
        <taxon>Spermatophyta</taxon>
        <taxon>Magnoliopsida</taxon>
        <taxon>Magnoliidae</taxon>
        <taxon>Laurales</taxon>
        <taxon>Calycanthaceae</taxon>
        <taxon>Calycanthus</taxon>
    </lineage>
</organism>
<accession>Q7J197</accession>
<geneLocation type="chloroplast"/>
<protein>
    <recommendedName>
        <fullName evidence="1">Photosystem II reaction center protein T</fullName>
        <shortName evidence="1">PSII-T</shortName>
    </recommendedName>
</protein>
<evidence type="ECO:0000255" key="1">
    <source>
        <dbReference type="HAMAP-Rule" id="MF_00808"/>
    </source>
</evidence>
<keyword id="KW-0150">Chloroplast</keyword>
<keyword id="KW-0472">Membrane</keyword>
<keyword id="KW-0602">Photosynthesis</keyword>
<keyword id="KW-0604">Photosystem II</keyword>
<keyword id="KW-0934">Plastid</keyword>
<keyword id="KW-0793">Thylakoid</keyword>
<keyword id="KW-0812">Transmembrane</keyword>
<keyword id="KW-1133">Transmembrane helix</keyword>
<comment type="function">
    <text evidence="1">Found at the monomer-monomer interface of the photosystem II (PS II) dimer, plays a role in assembly and dimerization of PSII. PSII is a light-driven water plastoquinone oxidoreductase, using light energy to abstract electrons from H(2)O, generating a proton gradient subsequently used for ATP formation.</text>
</comment>
<comment type="subunit">
    <text evidence="1">PSII is composed of 1 copy each of membrane proteins PsbA, PsbB, PsbC, PsbD, PsbE, PsbF, PsbH, PsbI, PsbJ, PsbK, PsbL, PsbM, PsbT, PsbY, PsbZ, Psb30/Ycf12, at least 3 peripheral proteins of the oxygen-evolving complex and a large number of cofactors. It forms dimeric complexes.</text>
</comment>
<comment type="subcellular location">
    <subcellularLocation>
        <location evidence="1">Plastid</location>
        <location evidence="1">Chloroplast thylakoid membrane</location>
        <topology evidence="1">Single-pass membrane protein</topology>
    </subcellularLocation>
</comment>
<comment type="similarity">
    <text evidence="1">Belongs to the PsbT family.</text>
</comment>
<dbReference type="EMBL" id="AF123846">
    <property type="protein sequence ID" value="AAG26262.1"/>
    <property type="molecule type" value="Genomic_DNA"/>
</dbReference>
<dbReference type="SMR" id="Q7J197"/>
<dbReference type="GO" id="GO:0009535">
    <property type="term" value="C:chloroplast thylakoid membrane"/>
    <property type="evidence" value="ECO:0007669"/>
    <property type="project" value="UniProtKB-SubCell"/>
</dbReference>
<dbReference type="GO" id="GO:0009539">
    <property type="term" value="C:photosystem II reaction center"/>
    <property type="evidence" value="ECO:0007669"/>
    <property type="project" value="InterPro"/>
</dbReference>
<dbReference type="GO" id="GO:0015979">
    <property type="term" value="P:photosynthesis"/>
    <property type="evidence" value="ECO:0007669"/>
    <property type="project" value="UniProtKB-UniRule"/>
</dbReference>
<dbReference type="HAMAP" id="MF_00808">
    <property type="entry name" value="PSII_PsbT"/>
    <property type="match status" value="1"/>
</dbReference>
<dbReference type="InterPro" id="IPR001743">
    <property type="entry name" value="PSII_PsbT"/>
</dbReference>
<dbReference type="InterPro" id="IPR037268">
    <property type="entry name" value="PSII_PsbT_sf"/>
</dbReference>
<dbReference type="PANTHER" id="PTHR36411">
    <property type="match status" value="1"/>
</dbReference>
<dbReference type="PANTHER" id="PTHR36411:SF2">
    <property type="entry name" value="PHOTOSYSTEM II REACTION CENTER PROTEIN T"/>
    <property type="match status" value="1"/>
</dbReference>
<dbReference type="Pfam" id="PF01405">
    <property type="entry name" value="PsbT"/>
    <property type="match status" value="1"/>
</dbReference>
<dbReference type="SUPFAM" id="SSF161029">
    <property type="entry name" value="Photosystem II reaction center protein T, PsbT"/>
    <property type="match status" value="1"/>
</dbReference>
<sequence>MEALVYTFLLVSTLGIIFFAIFFREPPKVPTKKMK</sequence>
<proteinExistence type="inferred from homology"/>